<protein>
    <recommendedName>
        <fullName evidence="1">Chaperone protein DnaK</fullName>
    </recommendedName>
    <alternativeName>
        <fullName evidence="1">HSP70</fullName>
    </alternativeName>
    <alternativeName>
        <fullName evidence="1">Heat shock 70 kDa protein</fullName>
    </alternativeName>
    <alternativeName>
        <fullName evidence="1">Heat shock protein 70</fullName>
    </alternativeName>
</protein>
<comment type="function">
    <text evidence="1">Acts as a chaperone.</text>
</comment>
<comment type="similarity">
    <text evidence="1">Belongs to the heat shock protein 70 family.</text>
</comment>
<reference key="1">
    <citation type="journal article" date="2016" name="Stand. Genomic Sci.">
        <title>Complete genome sequence of the Antarctic Halorubrum lacusprofundi type strain ACAM 34.</title>
        <authorList>
            <person name="Anderson I.J."/>
            <person name="DasSarma P."/>
            <person name="Lucas S."/>
            <person name="Copeland A."/>
            <person name="Lapidus A."/>
            <person name="Del Rio T.G."/>
            <person name="Tice H."/>
            <person name="Dalin E."/>
            <person name="Bruce D.C."/>
            <person name="Goodwin L."/>
            <person name="Pitluck S."/>
            <person name="Sims D."/>
            <person name="Brettin T.S."/>
            <person name="Detter J.C."/>
            <person name="Han C.S."/>
            <person name="Larimer F."/>
            <person name="Hauser L."/>
            <person name="Land M."/>
            <person name="Ivanova N."/>
            <person name="Richardson P."/>
            <person name="Cavicchioli R."/>
            <person name="DasSarma S."/>
            <person name="Woese C.R."/>
            <person name="Kyrpides N.C."/>
        </authorList>
    </citation>
    <scope>NUCLEOTIDE SEQUENCE [LARGE SCALE GENOMIC DNA]</scope>
    <source>
        <strain>ATCC 49239 / DSM 5036 / JCM 8891 / ACAM 34</strain>
    </source>
</reference>
<feature type="chain" id="PRO_1000133147" description="Chaperone protein DnaK">
    <location>
        <begin position="1"/>
        <end position="644"/>
    </location>
</feature>
<feature type="region of interest" description="Disordered" evidence="2">
    <location>
        <begin position="490"/>
        <end position="533"/>
    </location>
</feature>
<feature type="region of interest" description="Disordered" evidence="2">
    <location>
        <begin position="570"/>
        <end position="644"/>
    </location>
</feature>
<feature type="compositionally biased region" description="Basic and acidic residues" evidence="2">
    <location>
        <begin position="492"/>
        <end position="513"/>
    </location>
</feature>
<feature type="compositionally biased region" description="Acidic residues" evidence="2">
    <location>
        <begin position="523"/>
        <end position="533"/>
    </location>
</feature>
<feature type="compositionally biased region" description="Gly residues" evidence="2">
    <location>
        <begin position="588"/>
        <end position="622"/>
    </location>
</feature>
<feature type="compositionally biased region" description="Acidic residues" evidence="2">
    <location>
        <begin position="624"/>
        <end position="644"/>
    </location>
</feature>
<gene>
    <name evidence="1" type="primary">dnaK</name>
    <name type="ordered locus">Hlac_0682</name>
</gene>
<name>DNAK_HALLT</name>
<accession>B9LUC7</accession>
<organism>
    <name type="scientific">Halorubrum lacusprofundi (strain ATCC 49239 / DSM 5036 / JCM 8891 / ACAM 34)</name>
    <dbReference type="NCBI Taxonomy" id="416348"/>
    <lineage>
        <taxon>Archaea</taxon>
        <taxon>Methanobacteriati</taxon>
        <taxon>Methanobacteriota</taxon>
        <taxon>Stenosarchaea group</taxon>
        <taxon>Halobacteria</taxon>
        <taxon>Halobacteriales</taxon>
        <taxon>Haloferacaceae</taxon>
        <taxon>Halorubrum</taxon>
    </lineage>
</organism>
<sequence>MASNKILGIDLGTTNSAFAVMEGDEPEIIANAEGDRTTPSVVAFADDGERLVGKPAKNQAVQNPDRTIQSIKRHMGEDGYTVEIGDEEYTPEQVSAMILQKIKRDAEEYLGDDVEKAVITVPAYFNDKQRQATKDAGEIAGFEVERIVNEPTAASMAYGLDDESDQTVLVYDLGGGTFDVSVLDLGGGVYEVVATNGDNDLGGDDWDEALIDHLAKEFKNNHGIDLREDRQALQRLKDAAEEAKIELSSKKETTVNLPFITATDSGPVHLEQSITRATFENLTSDLIERTVNPTEQALSDADYSKSDIDEVILVGGSTRMPQVQEQVEALVGQEPKKNVNPDEAVALGAAVQGGVLSGDVDDIVLLDVTPLSLGIEVKGGLFERLIEKNTTIPTEESKVFTTAADNQTSVNVRVFQGEREIAEENELLGAFQLSGIPPAPAGTPQIEVSFNIDENGIVNVEAEDQGSGNAESITIEGGVGLSDEEIDQMQEEAEKHKEEDEARRERIEARNEAETSIQRAETLLEENEEELDDDELVADIEAAIEDVEEVLEDEDADTDEIESATEALTEELQEIGKQMYEGQAAQAGPGGAGGAAGAGPGGMGGMGGAAGPGGAGGAGPGGADADDEEYVDADFEDVDDEDDA</sequence>
<evidence type="ECO:0000255" key="1">
    <source>
        <dbReference type="HAMAP-Rule" id="MF_00332"/>
    </source>
</evidence>
<evidence type="ECO:0000256" key="2">
    <source>
        <dbReference type="SAM" id="MobiDB-lite"/>
    </source>
</evidence>
<proteinExistence type="inferred from homology"/>
<dbReference type="EMBL" id="CP001365">
    <property type="protein sequence ID" value="ACM56284.1"/>
    <property type="molecule type" value="Genomic_DNA"/>
</dbReference>
<dbReference type="RefSeq" id="WP_012659916.1">
    <property type="nucleotide sequence ID" value="NC_012029.1"/>
</dbReference>
<dbReference type="SMR" id="B9LUC7"/>
<dbReference type="GeneID" id="7401817"/>
<dbReference type="KEGG" id="hla:Hlac_0682"/>
<dbReference type="eggNOG" id="arCOG03060">
    <property type="taxonomic scope" value="Archaea"/>
</dbReference>
<dbReference type="HOGENOM" id="CLU_005965_2_4_2"/>
<dbReference type="Proteomes" id="UP000000740">
    <property type="component" value="Chromosome 1"/>
</dbReference>
<dbReference type="GO" id="GO:0005524">
    <property type="term" value="F:ATP binding"/>
    <property type="evidence" value="ECO:0007669"/>
    <property type="project" value="UniProtKB-UniRule"/>
</dbReference>
<dbReference type="GO" id="GO:0140662">
    <property type="term" value="F:ATP-dependent protein folding chaperone"/>
    <property type="evidence" value="ECO:0007669"/>
    <property type="project" value="InterPro"/>
</dbReference>
<dbReference type="GO" id="GO:0051082">
    <property type="term" value="F:unfolded protein binding"/>
    <property type="evidence" value="ECO:0007669"/>
    <property type="project" value="InterPro"/>
</dbReference>
<dbReference type="CDD" id="cd10234">
    <property type="entry name" value="ASKHA_NBD_HSP70_DnaK-like"/>
    <property type="match status" value="1"/>
</dbReference>
<dbReference type="FunFam" id="2.60.34.10:FF:000014">
    <property type="entry name" value="Chaperone protein DnaK HSP70"/>
    <property type="match status" value="1"/>
</dbReference>
<dbReference type="FunFam" id="3.30.420.40:FF:000071">
    <property type="entry name" value="Molecular chaperone DnaK"/>
    <property type="match status" value="1"/>
</dbReference>
<dbReference type="FunFam" id="3.90.640.10:FF:000003">
    <property type="entry name" value="Molecular chaperone DnaK"/>
    <property type="match status" value="1"/>
</dbReference>
<dbReference type="Gene3D" id="1.20.1270.10">
    <property type="match status" value="1"/>
</dbReference>
<dbReference type="Gene3D" id="3.30.420.40">
    <property type="match status" value="2"/>
</dbReference>
<dbReference type="Gene3D" id="3.90.640.10">
    <property type="entry name" value="Actin, Chain A, domain 4"/>
    <property type="match status" value="1"/>
</dbReference>
<dbReference type="Gene3D" id="2.60.34.10">
    <property type="entry name" value="Substrate Binding Domain Of DNAk, Chain A, domain 1"/>
    <property type="match status" value="1"/>
</dbReference>
<dbReference type="HAMAP" id="MF_00332">
    <property type="entry name" value="DnaK"/>
    <property type="match status" value="1"/>
</dbReference>
<dbReference type="InterPro" id="IPR043129">
    <property type="entry name" value="ATPase_NBD"/>
</dbReference>
<dbReference type="InterPro" id="IPR012725">
    <property type="entry name" value="Chaperone_DnaK"/>
</dbReference>
<dbReference type="InterPro" id="IPR018181">
    <property type="entry name" value="Heat_shock_70_CS"/>
</dbReference>
<dbReference type="InterPro" id="IPR029048">
    <property type="entry name" value="HSP70_C_sf"/>
</dbReference>
<dbReference type="InterPro" id="IPR029047">
    <property type="entry name" value="HSP70_peptide-bd_sf"/>
</dbReference>
<dbReference type="InterPro" id="IPR013126">
    <property type="entry name" value="Hsp_70_fam"/>
</dbReference>
<dbReference type="NCBIfam" id="NF001413">
    <property type="entry name" value="PRK00290.1"/>
    <property type="match status" value="1"/>
</dbReference>
<dbReference type="NCBIfam" id="TIGR02350">
    <property type="entry name" value="prok_dnaK"/>
    <property type="match status" value="1"/>
</dbReference>
<dbReference type="PANTHER" id="PTHR19375">
    <property type="entry name" value="HEAT SHOCK PROTEIN 70KDA"/>
    <property type="match status" value="1"/>
</dbReference>
<dbReference type="Pfam" id="PF00012">
    <property type="entry name" value="HSP70"/>
    <property type="match status" value="1"/>
</dbReference>
<dbReference type="PRINTS" id="PR00301">
    <property type="entry name" value="HEATSHOCK70"/>
</dbReference>
<dbReference type="SUPFAM" id="SSF53067">
    <property type="entry name" value="Actin-like ATPase domain"/>
    <property type="match status" value="2"/>
</dbReference>
<dbReference type="SUPFAM" id="SSF100934">
    <property type="entry name" value="Heat shock protein 70kD (HSP70), C-terminal subdomain"/>
    <property type="match status" value="1"/>
</dbReference>
<dbReference type="SUPFAM" id="SSF100920">
    <property type="entry name" value="Heat shock protein 70kD (HSP70), peptide-binding domain"/>
    <property type="match status" value="1"/>
</dbReference>
<dbReference type="PROSITE" id="PS00297">
    <property type="entry name" value="HSP70_1"/>
    <property type="match status" value="1"/>
</dbReference>
<dbReference type="PROSITE" id="PS00329">
    <property type="entry name" value="HSP70_2"/>
    <property type="match status" value="1"/>
</dbReference>
<dbReference type="PROSITE" id="PS01036">
    <property type="entry name" value="HSP70_3"/>
    <property type="match status" value="1"/>
</dbReference>
<keyword id="KW-0067">ATP-binding</keyword>
<keyword id="KW-0143">Chaperone</keyword>
<keyword id="KW-0547">Nucleotide-binding</keyword>
<keyword id="KW-1185">Reference proteome</keyword>